<comment type="function">
    <text evidence="1">Catalyzes the NAD(+)-dependent oxidation of L-threonine to 2-amino-3-ketobutyrate.</text>
</comment>
<comment type="catalytic activity">
    <reaction evidence="1">
        <text>L-threonine + NAD(+) = (2S)-2-amino-3-oxobutanoate + NADH + H(+)</text>
        <dbReference type="Rhea" id="RHEA:13161"/>
        <dbReference type="ChEBI" id="CHEBI:15378"/>
        <dbReference type="ChEBI" id="CHEBI:57540"/>
        <dbReference type="ChEBI" id="CHEBI:57926"/>
        <dbReference type="ChEBI" id="CHEBI:57945"/>
        <dbReference type="ChEBI" id="CHEBI:78948"/>
        <dbReference type="EC" id="1.1.1.103"/>
    </reaction>
</comment>
<comment type="cofactor">
    <cofactor evidence="1">
        <name>Zn(2+)</name>
        <dbReference type="ChEBI" id="CHEBI:29105"/>
    </cofactor>
    <text evidence="1">Binds 2 Zn(2+) ions per subunit.</text>
</comment>
<comment type="pathway">
    <text evidence="1">Amino-acid degradation; L-threonine degradation via oxydo-reductase pathway; glycine from L-threonine: step 1/2.</text>
</comment>
<comment type="subunit">
    <text evidence="1">Homotetramer.</text>
</comment>
<comment type="subcellular location">
    <subcellularLocation>
        <location evidence="1">Cytoplasm</location>
    </subcellularLocation>
</comment>
<comment type="similarity">
    <text evidence="1">Belongs to the zinc-containing alcohol dehydrogenase family.</text>
</comment>
<sequence>MKALAKLERGPGLTLTRVKKPEVGHNDVLIKIRRTAICGTDIHIWKWDDWAQKTIPVPMHVGHEYVGEIVEMGQEVRGFSIGDRVSGEGHITCGFCRNCRAGRRHLCRNTVGVGVNREGAFAEYLAIPAFNAFKIPPEISDDLAAIFDPFGNATHTALSFNLVGEDVLITGAGPIGVMAVAIAKHVGARNVVITDINDYRLELARKMGATRAVNVSRESLRDVMADLHMTEGFDVGLEMSGVPSAFTSLLESMNHGGKVALLGIPPAQTAIDWNQVIFKGLEIKGIYGREMFETWYKMVAMLQSGLDLSPIITHRFAVDDYEKGFAAMLSGESGKVILDWADA</sequence>
<reference key="1">
    <citation type="journal article" date="2004" name="Proc. Natl. Acad. Sci. U.S.A.">
        <title>Genomic plasticity of the causative agent of melioidosis, Burkholderia pseudomallei.</title>
        <authorList>
            <person name="Holden M.T.G."/>
            <person name="Titball R.W."/>
            <person name="Peacock S.J."/>
            <person name="Cerdeno-Tarraga A.-M."/>
            <person name="Atkins T."/>
            <person name="Crossman L.C."/>
            <person name="Pitt T."/>
            <person name="Churcher C."/>
            <person name="Mungall K.L."/>
            <person name="Bentley S.D."/>
            <person name="Sebaihia M."/>
            <person name="Thomson N.R."/>
            <person name="Bason N."/>
            <person name="Beacham I.R."/>
            <person name="Brooks K."/>
            <person name="Brown K.A."/>
            <person name="Brown N.F."/>
            <person name="Challis G.L."/>
            <person name="Cherevach I."/>
            <person name="Chillingworth T."/>
            <person name="Cronin A."/>
            <person name="Crossett B."/>
            <person name="Davis P."/>
            <person name="DeShazer D."/>
            <person name="Feltwell T."/>
            <person name="Fraser A."/>
            <person name="Hance Z."/>
            <person name="Hauser H."/>
            <person name="Holroyd S."/>
            <person name="Jagels K."/>
            <person name="Keith K.E."/>
            <person name="Maddison M."/>
            <person name="Moule S."/>
            <person name="Price C."/>
            <person name="Quail M.A."/>
            <person name="Rabbinowitsch E."/>
            <person name="Rutherford K."/>
            <person name="Sanders M."/>
            <person name="Simmonds M."/>
            <person name="Songsivilai S."/>
            <person name="Stevens K."/>
            <person name="Tumapa S."/>
            <person name="Vesaratchavest M."/>
            <person name="Whitehead S."/>
            <person name="Yeats C."/>
            <person name="Barrell B.G."/>
            <person name="Oyston P.C.F."/>
            <person name="Parkhill J."/>
        </authorList>
    </citation>
    <scope>NUCLEOTIDE SEQUENCE [LARGE SCALE GENOMIC DNA]</scope>
    <source>
        <strain>K96243</strain>
    </source>
</reference>
<proteinExistence type="inferred from homology"/>
<keyword id="KW-0963">Cytoplasm</keyword>
<keyword id="KW-0479">Metal-binding</keyword>
<keyword id="KW-0520">NAD</keyword>
<keyword id="KW-0560">Oxidoreductase</keyword>
<keyword id="KW-1185">Reference proteome</keyword>
<keyword id="KW-0862">Zinc</keyword>
<evidence type="ECO:0000255" key="1">
    <source>
        <dbReference type="HAMAP-Rule" id="MF_00627"/>
    </source>
</evidence>
<protein>
    <recommendedName>
        <fullName evidence="1">L-threonine 3-dehydrogenase</fullName>
        <shortName evidence="1">TDH</shortName>
        <ecNumber evidence="1">1.1.1.103</ecNumber>
    </recommendedName>
</protein>
<accession>Q63PD9</accession>
<name>TDH_BURPS</name>
<organism>
    <name type="scientific">Burkholderia pseudomallei (strain K96243)</name>
    <dbReference type="NCBI Taxonomy" id="272560"/>
    <lineage>
        <taxon>Bacteria</taxon>
        <taxon>Pseudomonadati</taxon>
        <taxon>Pseudomonadota</taxon>
        <taxon>Betaproteobacteria</taxon>
        <taxon>Burkholderiales</taxon>
        <taxon>Burkholderiaceae</taxon>
        <taxon>Burkholderia</taxon>
        <taxon>pseudomallei group</taxon>
    </lineage>
</organism>
<gene>
    <name evidence="1" type="primary">tdh</name>
    <name type="ordered locus">BPSS0006</name>
</gene>
<dbReference type="EC" id="1.1.1.103" evidence="1"/>
<dbReference type="EMBL" id="BX571966">
    <property type="protein sequence ID" value="CAH37449.1"/>
    <property type="molecule type" value="Genomic_DNA"/>
</dbReference>
<dbReference type="RefSeq" id="WP_004194543.1">
    <property type="nucleotide sequence ID" value="NZ_CP009537.1"/>
</dbReference>
<dbReference type="RefSeq" id="YP_110030.1">
    <property type="nucleotide sequence ID" value="NC_006351.1"/>
</dbReference>
<dbReference type="SMR" id="Q63PD9"/>
<dbReference type="STRING" id="272560.BPSS0006"/>
<dbReference type="GeneID" id="93062068"/>
<dbReference type="KEGG" id="bps:BPSS0006"/>
<dbReference type="PATRIC" id="fig|272560.51.peg.6000"/>
<dbReference type="eggNOG" id="COG1063">
    <property type="taxonomic scope" value="Bacteria"/>
</dbReference>
<dbReference type="UniPathway" id="UPA00046">
    <property type="reaction ID" value="UER00505"/>
</dbReference>
<dbReference type="Proteomes" id="UP000000605">
    <property type="component" value="Chromosome 2"/>
</dbReference>
<dbReference type="GO" id="GO:0005737">
    <property type="term" value="C:cytoplasm"/>
    <property type="evidence" value="ECO:0007669"/>
    <property type="project" value="UniProtKB-SubCell"/>
</dbReference>
<dbReference type="GO" id="GO:0008743">
    <property type="term" value="F:L-threonine 3-dehydrogenase activity"/>
    <property type="evidence" value="ECO:0007669"/>
    <property type="project" value="UniProtKB-UniRule"/>
</dbReference>
<dbReference type="GO" id="GO:0008270">
    <property type="term" value="F:zinc ion binding"/>
    <property type="evidence" value="ECO:0007669"/>
    <property type="project" value="UniProtKB-UniRule"/>
</dbReference>
<dbReference type="GO" id="GO:0019518">
    <property type="term" value="P:L-threonine catabolic process to glycine"/>
    <property type="evidence" value="ECO:0007669"/>
    <property type="project" value="UniProtKB-UniPathway"/>
</dbReference>
<dbReference type="Gene3D" id="3.90.180.10">
    <property type="entry name" value="Medium-chain alcohol dehydrogenases, catalytic domain"/>
    <property type="match status" value="1"/>
</dbReference>
<dbReference type="Gene3D" id="3.40.50.720">
    <property type="entry name" value="NAD(P)-binding Rossmann-like Domain"/>
    <property type="match status" value="1"/>
</dbReference>
<dbReference type="HAMAP" id="MF_00627">
    <property type="entry name" value="Thr_dehydrog"/>
    <property type="match status" value="1"/>
</dbReference>
<dbReference type="InterPro" id="IPR013149">
    <property type="entry name" value="ADH-like_C"/>
</dbReference>
<dbReference type="InterPro" id="IPR013154">
    <property type="entry name" value="ADH-like_N"/>
</dbReference>
<dbReference type="InterPro" id="IPR002328">
    <property type="entry name" value="ADH_Zn_CS"/>
</dbReference>
<dbReference type="InterPro" id="IPR011032">
    <property type="entry name" value="GroES-like_sf"/>
</dbReference>
<dbReference type="InterPro" id="IPR004627">
    <property type="entry name" value="L-Threonine_3-DHase"/>
</dbReference>
<dbReference type="InterPro" id="IPR036291">
    <property type="entry name" value="NAD(P)-bd_dom_sf"/>
</dbReference>
<dbReference type="InterPro" id="IPR020843">
    <property type="entry name" value="PKS_ER"/>
</dbReference>
<dbReference type="InterPro" id="IPR050129">
    <property type="entry name" value="Zn_alcohol_dh"/>
</dbReference>
<dbReference type="NCBIfam" id="NF003808">
    <property type="entry name" value="PRK05396.1"/>
    <property type="match status" value="1"/>
</dbReference>
<dbReference type="NCBIfam" id="TIGR00692">
    <property type="entry name" value="tdh"/>
    <property type="match status" value="1"/>
</dbReference>
<dbReference type="PANTHER" id="PTHR43401">
    <property type="entry name" value="L-THREONINE 3-DEHYDROGENASE"/>
    <property type="match status" value="1"/>
</dbReference>
<dbReference type="PANTHER" id="PTHR43401:SF2">
    <property type="entry name" value="L-THREONINE 3-DEHYDROGENASE"/>
    <property type="match status" value="1"/>
</dbReference>
<dbReference type="Pfam" id="PF08240">
    <property type="entry name" value="ADH_N"/>
    <property type="match status" value="1"/>
</dbReference>
<dbReference type="Pfam" id="PF00107">
    <property type="entry name" value="ADH_zinc_N"/>
    <property type="match status" value="1"/>
</dbReference>
<dbReference type="SMART" id="SM00829">
    <property type="entry name" value="PKS_ER"/>
    <property type="match status" value="1"/>
</dbReference>
<dbReference type="SUPFAM" id="SSF50129">
    <property type="entry name" value="GroES-like"/>
    <property type="match status" value="1"/>
</dbReference>
<dbReference type="SUPFAM" id="SSF51735">
    <property type="entry name" value="NAD(P)-binding Rossmann-fold domains"/>
    <property type="match status" value="1"/>
</dbReference>
<dbReference type="PROSITE" id="PS00059">
    <property type="entry name" value="ADH_ZINC"/>
    <property type="match status" value="1"/>
</dbReference>
<feature type="chain" id="PRO_0000160833" description="L-threonine 3-dehydrogenase">
    <location>
        <begin position="1"/>
        <end position="343"/>
    </location>
</feature>
<feature type="active site" description="Charge relay system" evidence="1">
    <location>
        <position position="40"/>
    </location>
</feature>
<feature type="active site" description="Charge relay system" evidence="1">
    <location>
        <position position="43"/>
    </location>
</feature>
<feature type="binding site" evidence="1">
    <location>
        <position position="38"/>
    </location>
    <ligand>
        <name>Zn(2+)</name>
        <dbReference type="ChEBI" id="CHEBI:29105"/>
        <label>1</label>
        <note>catalytic</note>
    </ligand>
</feature>
<feature type="binding site" evidence="1">
    <location>
        <position position="63"/>
    </location>
    <ligand>
        <name>Zn(2+)</name>
        <dbReference type="ChEBI" id="CHEBI:29105"/>
        <label>1</label>
        <note>catalytic</note>
    </ligand>
</feature>
<feature type="binding site" evidence="1">
    <location>
        <position position="64"/>
    </location>
    <ligand>
        <name>Zn(2+)</name>
        <dbReference type="ChEBI" id="CHEBI:29105"/>
        <label>1</label>
        <note>catalytic</note>
    </ligand>
</feature>
<feature type="binding site" evidence="1">
    <location>
        <position position="93"/>
    </location>
    <ligand>
        <name>Zn(2+)</name>
        <dbReference type="ChEBI" id="CHEBI:29105"/>
        <label>2</label>
    </ligand>
</feature>
<feature type="binding site" evidence="1">
    <location>
        <position position="96"/>
    </location>
    <ligand>
        <name>Zn(2+)</name>
        <dbReference type="ChEBI" id="CHEBI:29105"/>
        <label>2</label>
    </ligand>
</feature>
<feature type="binding site" evidence="1">
    <location>
        <position position="99"/>
    </location>
    <ligand>
        <name>Zn(2+)</name>
        <dbReference type="ChEBI" id="CHEBI:29105"/>
        <label>2</label>
    </ligand>
</feature>
<feature type="binding site" evidence="1">
    <location>
        <position position="107"/>
    </location>
    <ligand>
        <name>Zn(2+)</name>
        <dbReference type="ChEBI" id="CHEBI:29105"/>
        <label>2</label>
    </ligand>
</feature>
<feature type="binding site" evidence="1">
    <location>
        <position position="175"/>
    </location>
    <ligand>
        <name>NAD(+)</name>
        <dbReference type="ChEBI" id="CHEBI:57540"/>
    </ligand>
</feature>
<feature type="binding site" evidence="1">
    <location>
        <position position="195"/>
    </location>
    <ligand>
        <name>NAD(+)</name>
        <dbReference type="ChEBI" id="CHEBI:57540"/>
    </ligand>
</feature>
<feature type="binding site" evidence="1">
    <location>
        <position position="200"/>
    </location>
    <ligand>
        <name>NAD(+)</name>
        <dbReference type="ChEBI" id="CHEBI:57540"/>
    </ligand>
</feature>
<feature type="binding site" evidence="1">
    <location>
        <begin position="262"/>
        <end position="264"/>
    </location>
    <ligand>
        <name>NAD(+)</name>
        <dbReference type="ChEBI" id="CHEBI:57540"/>
    </ligand>
</feature>
<feature type="binding site" evidence="1">
    <location>
        <begin position="286"/>
        <end position="287"/>
    </location>
    <ligand>
        <name>NAD(+)</name>
        <dbReference type="ChEBI" id="CHEBI:57540"/>
    </ligand>
</feature>
<feature type="site" description="Important for catalytic activity for the proton relay mechanism but does not participate directly in the coordination of zinc atom" evidence="1">
    <location>
        <position position="148"/>
    </location>
</feature>